<comment type="similarity">
    <text evidence="1">Belongs to the eukaryotic ribosomal protein eS4 family.</text>
</comment>
<reference key="1">
    <citation type="journal article" date="1998" name="Mol. Biol. Evol.">
        <title>Evolution of RPS4Y.</title>
        <authorList>
            <person name="Bergen A.W."/>
            <person name="Pratt M."/>
            <person name="Mehlman P."/>
            <person name="Goldman D."/>
        </authorList>
    </citation>
    <scope>NUCLEOTIDE SEQUENCE [GENOMIC DNA]</scope>
</reference>
<name>RS4Y1_PONPY</name>
<organism>
    <name type="scientific">Pongo pygmaeus</name>
    <name type="common">Bornean orangutan</name>
    <dbReference type="NCBI Taxonomy" id="9600"/>
    <lineage>
        <taxon>Eukaryota</taxon>
        <taxon>Metazoa</taxon>
        <taxon>Chordata</taxon>
        <taxon>Craniata</taxon>
        <taxon>Vertebrata</taxon>
        <taxon>Euteleostomi</taxon>
        <taxon>Mammalia</taxon>
        <taxon>Eutheria</taxon>
        <taxon>Euarchontoglires</taxon>
        <taxon>Primates</taxon>
        <taxon>Haplorrhini</taxon>
        <taxon>Catarrhini</taxon>
        <taxon>Hominidae</taxon>
        <taxon>Pongo</taxon>
    </lineage>
</organism>
<proteinExistence type="inferred from homology"/>
<dbReference type="EMBL" id="AH012493">
    <property type="protein sequence ID" value="AAO37289.1"/>
    <property type="molecule type" value="Genomic_DNA"/>
</dbReference>
<dbReference type="SMR" id="Q861U7"/>
<dbReference type="GO" id="GO:0022627">
    <property type="term" value="C:cytosolic small ribosomal subunit"/>
    <property type="evidence" value="ECO:0007669"/>
    <property type="project" value="TreeGrafter"/>
</dbReference>
<dbReference type="GO" id="GO:0019843">
    <property type="term" value="F:rRNA binding"/>
    <property type="evidence" value="ECO:0007669"/>
    <property type="project" value="UniProtKB-KW"/>
</dbReference>
<dbReference type="GO" id="GO:0003735">
    <property type="term" value="F:structural constituent of ribosome"/>
    <property type="evidence" value="ECO:0007669"/>
    <property type="project" value="InterPro"/>
</dbReference>
<dbReference type="GO" id="GO:0006412">
    <property type="term" value="P:translation"/>
    <property type="evidence" value="ECO:0007669"/>
    <property type="project" value="InterPro"/>
</dbReference>
<dbReference type="CDD" id="cd06087">
    <property type="entry name" value="KOW_RPS4"/>
    <property type="match status" value="1"/>
</dbReference>
<dbReference type="CDD" id="cd00165">
    <property type="entry name" value="S4"/>
    <property type="match status" value="1"/>
</dbReference>
<dbReference type="FunFam" id="2.30.30.30:FF:000005">
    <property type="entry name" value="40S ribosomal protein S4"/>
    <property type="match status" value="1"/>
</dbReference>
<dbReference type="FunFam" id="2.40.50.740:FF:000001">
    <property type="entry name" value="40S ribosomal protein S4"/>
    <property type="match status" value="1"/>
</dbReference>
<dbReference type="FunFam" id="3.10.290.10:FF:000051">
    <property type="entry name" value="40S ribosomal protein S4, X isoform"/>
    <property type="match status" value="1"/>
</dbReference>
<dbReference type="Gene3D" id="2.30.30.30">
    <property type="match status" value="1"/>
</dbReference>
<dbReference type="Gene3D" id="2.40.50.740">
    <property type="match status" value="1"/>
</dbReference>
<dbReference type="Gene3D" id="3.10.290.10">
    <property type="entry name" value="RNA-binding S4 domain"/>
    <property type="match status" value="1"/>
</dbReference>
<dbReference type="HAMAP" id="MF_00485">
    <property type="entry name" value="Ribosomal_eS4"/>
    <property type="match status" value="1"/>
</dbReference>
<dbReference type="InterPro" id="IPR005824">
    <property type="entry name" value="KOW"/>
</dbReference>
<dbReference type="InterPro" id="IPR014722">
    <property type="entry name" value="Rib_uL2_dom2"/>
</dbReference>
<dbReference type="InterPro" id="IPR000876">
    <property type="entry name" value="Ribosomal_eS4"/>
</dbReference>
<dbReference type="InterPro" id="IPR032277">
    <property type="entry name" value="Ribosomal_eS4_C"/>
</dbReference>
<dbReference type="InterPro" id="IPR013845">
    <property type="entry name" value="Ribosomal_eS4_central_region"/>
</dbReference>
<dbReference type="InterPro" id="IPR038237">
    <property type="entry name" value="Ribosomal_eS4_central_sf"/>
</dbReference>
<dbReference type="InterPro" id="IPR041982">
    <property type="entry name" value="Ribosomal_eS4_KOW"/>
</dbReference>
<dbReference type="InterPro" id="IPR013843">
    <property type="entry name" value="Ribosomal_eS4_N"/>
</dbReference>
<dbReference type="InterPro" id="IPR018199">
    <property type="entry name" value="Ribosomal_eS4_N_CS"/>
</dbReference>
<dbReference type="InterPro" id="IPR002942">
    <property type="entry name" value="S4_RNA-bd"/>
</dbReference>
<dbReference type="InterPro" id="IPR036986">
    <property type="entry name" value="S4_RNA-bd_sf"/>
</dbReference>
<dbReference type="PANTHER" id="PTHR11581">
    <property type="entry name" value="30S/40S RIBOSOMAL PROTEIN S4"/>
    <property type="match status" value="1"/>
</dbReference>
<dbReference type="PANTHER" id="PTHR11581:SF0">
    <property type="entry name" value="SMALL RIBOSOMAL SUBUNIT PROTEIN ES4"/>
    <property type="match status" value="1"/>
</dbReference>
<dbReference type="Pfam" id="PF16121">
    <property type="entry name" value="40S_S4_C"/>
    <property type="match status" value="1"/>
</dbReference>
<dbReference type="Pfam" id="PF00467">
    <property type="entry name" value="KOW"/>
    <property type="match status" value="1"/>
</dbReference>
<dbReference type="Pfam" id="PF00900">
    <property type="entry name" value="Ribosomal_S4e"/>
    <property type="match status" value="1"/>
</dbReference>
<dbReference type="Pfam" id="PF08071">
    <property type="entry name" value="RS4NT"/>
    <property type="match status" value="1"/>
</dbReference>
<dbReference type="PIRSF" id="PIRSF002116">
    <property type="entry name" value="Ribosomal_S4"/>
    <property type="match status" value="1"/>
</dbReference>
<dbReference type="SMART" id="SM00363">
    <property type="entry name" value="S4"/>
    <property type="match status" value="1"/>
</dbReference>
<dbReference type="PROSITE" id="PS00528">
    <property type="entry name" value="RIBOSOMAL_S4E"/>
    <property type="match status" value="1"/>
</dbReference>
<dbReference type="PROSITE" id="PS50889">
    <property type="entry name" value="S4"/>
    <property type="match status" value="1"/>
</dbReference>
<feature type="chain" id="PRO_0000130817" description="Small ribosomal subunit protein eS4">
    <location>
        <begin position="1"/>
        <end position="263"/>
    </location>
</feature>
<feature type="domain" description="S4 RNA-binding">
    <location>
        <begin position="42"/>
        <end position="104"/>
    </location>
</feature>
<evidence type="ECO:0000305" key="1"/>
<gene>
    <name type="primary">RPS4Y1</name>
    <name type="synonym">RPS4Y</name>
</gene>
<keyword id="KW-0687">Ribonucleoprotein</keyword>
<keyword id="KW-0689">Ribosomal protein</keyword>
<keyword id="KW-0694">RNA-binding</keyword>
<keyword id="KW-0699">rRNA-binding</keyword>
<sequence length="263" mass="29493">MARGPKKHLKRVAAPKHWMLDKLTGVFAPRPSTGPHKLRECLPLIVFLRNRLKYALTGDEVKKICMQRFIKIDGKVRVDITYPAGFMDVISIDKTGEHFRLVYDTKGRFAVQRITVEEAKYKLCKVRKITVGMKGIPHLVTHDARTIRYPDPLIKVNDTVQIDLGTGKIINFIKFDTGNVCMVIGGANLGRVGVITNRERHPGSFDVVHVKDANGNSFATRISNIFVIGNGNKPWISLPRGKGIRLTIAEERDKRLATKQSSG</sequence>
<accession>Q861U7</accession>
<protein>
    <recommendedName>
        <fullName evidence="1">Small ribosomal subunit protein eS4</fullName>
    </recommendedName>
    <alternativeName>
        <fullName>40S ribosomal protein S4, Y isoform 1</fullName>
    </alternativeName>
</protein>